<sequence>MVEVTIWLAFFAGVVSFLSPCVFPLVPVYLAQLTGTQISGNEITADRKLILMRSLGFILGFTSIFIFLGASSTFIGQLFWGNRQLFEQIGGIIITVFGLQMMGVISIRMLLSEKRLQAKPRQSASFANSVLIGFLFATGWTPCIGLVLGAILVLAGDANTMWSGMSMLFVYSMGLAIPFFLVALLWSRSLHKVRKLNKWLPTIQKGSGVVMVALGVLLFTGQFSTIAAYLARINPFGI</sequence>
<protein>
    <recommendedName>
        <fullName>Cytochrome c-type biogenesis protein CcdA</fullName>
    </recommendedName>
</protein>
<dbReference type="EMBL" id="BA000004">
    <property type="protein sequence ID" value="BAB04913.1"/>
    <property type="molecule type" value="Genomic_DNA"/>
</dbReference>
<dbReference type="PIR" id="B83799">
    <property type="entry name" value="B83799"/>
</dbReference>
<dbReference type="RefSeq" id="WP_010897363.1">
    <property type="nucleotide sequence ID" value="NC_002570.2"/>
</dbReference>
<dbReference type="SMR" id="Q9KDL8"/>
<dbReference type="STRING" id="272558.gene:10727088"/>
<dbReference type="GeneID" id="87596816"/>
<dbReference type="KEGG" id="bha:BH1194"/>
<dbReference type="eggNOG" id="COG0785">
    <property type="taxonomic scope" value="Bacteria"/>
</dbReference>
<dbReference type="HOGENOM" id="CLU_053225_2_0_9"/>
<dbReference type="OrthoDB" id="9803065at2"/>
<dbReference type="Proteomes" id="UP000001258">
    <property type="component" value="Chromosome"/>
</dbReference>
<dbReference type="GO" id="GO:0005886">
    <property type="term" value="C:plasma membrane"/>
    <property type="evidence" value="ECO:0007669"/>
    <property type="project" value="UniProtKB-SubCell"/>
</dbReference>
<dbReference type="GO" id="GO:0017004">
    <property type="term" value="P:cytochrome complex assembly"/>
    <property type="evidence" value="ECO:0007669"/>
    <property type="project" value="UniProtKB-KW"/>
</dbReference>
<dbReference type="GO" id="GO:0030435">
    <property type="term" value="P:sporulation resulting in formation of a cellular spore"/>
    <property type="evidence" value="ECO:0007669"/>
    <property type="project" value="UniProtKB-KW"/>
</dbReference>
<dbReference type="InterPro" id="IPR003834">
    <property type="entry name" value="Cyt_c_assmbl_TM_dom"/>
</dbReference>
<dbReference type="InterPro" id="IPR051790">
    <property type="entry name" value="Cytochrome_c-biogenesis_DsbD"/>
</dbReference>
<dbReference type="PANTHER" id="PTHR31272">
    <property type="entry name" value="CYTOCHROME C-TYPE BIOGENESIS PROTEIN HI_1454-RELATED"/>
    <property type="match status" value="1"/>
</dbReference>
<dbReference type="PANTHER" id="PTHR31272:SF4">
    <property type="entry name" value="CYTOCHROME C-TYPE BIOGENESIS PROTEIN HI_1454-RELATED"/>
    <property type="match status" value="1"/>
</dbReference>
<dbReference type="Pfam" id="PF02683">
    <property type="entry name" value="DsbD_TM"/>
    <property type="match status" value="1"/>
</dbReference>
<feature type="chain" id="PRO_0000201623" description="Cytochrome c-type biogenesis protein CcdA">
    <location>
        <begin position="1"/>
        <end position="238"/>
    </location>
</feature>
<feature type="transmembrane region" description="Helical" evidence="2">
    <location>
        <begin position="6"/>
        <end position="26"/>
    </location>
</feature>
<feature type="transmembrane region" description="Helical" evidence="2">
    <location>
        <begin position="55"/>
        <end position="75"/>
    </location>
</feature>
<feature type="transmembrane region" description="Helical" evidence="2">
    <location>
        <begin position="85"/>
        <end position="105"/>
    </location>
</feature>
<feature type="transmembrane region" description="Helical" evidence="2">
    <location>
        <begin position="134"/>
        <end position="154"/>
    </location>
</feature>
<feature type="transmembrane region" description="Helical" evidence="2">
    <location>
        <begin position="167"/>
        <end position="187"/>
    </location>
</feature>
<feature type="transmembrane region" description="Helical" evidence="2">
    <location>
        <begin position="208"/>
        <end position="228"/>
    </location>
</feature>
<organism>
    <name type="scientific">Halalkalibacterium halodurans (strain ATCC BAA-125 / DSM 18197 / FERM 7344 / JCM 9153 / C-125)</name>
    <name type="common">Bacillus halodurans</name>
    <dbReference type="NCBI Taxonomy" id="272558"/>
    <lineage>
        <taxon>Bacteria</taxon>
        <taxon>Bacillati</taxon>
        <taxon>Bacillota</taxon>
        <taxon>Bacilli</taxon>
        <taxon>Bacillales</taxon>
        <taxon>Bacillaceae</taxon>
        <taxon>Halalkalibacterium (ex Joshi et al. 2022)</taxon>
    </lineage>
</organism>
<accession>Q9KDL8</accession>
<proteinExistence type="inferred from homology"/>
<name>CCDA_HALH5</name>
<comment type="function">
    <text evidence="1">Required for cytochrome c synthesis and stage V of sporulation. Might transfer reducing equivalents across the cytoplasmic membrane, promoting efficient disulfide bond isomerization of proteins localized on the outer surface of the membrane or in the spore coat (By similarity).</text>
</comment>
<comment type="subcellular location">
    <subcellularLocation>
        <location evidence="1">Cell membrane</location>
        <topology evidence="1">Multi-pass membrane protein</topology>
    </subcellularLocation>
</comment>
<comment type="similarity">
    <text evidence="3">Belongs to the DsbD family.</text>
</comment>
<gene>
    <name type="primary">ccdA</name>
    <name type="ordered locus">BH1194</name>
</gene>
<reference key="1">
    <citation type="journal article" date="2000" name="Nucleic Acids Res.">
        <title>Complete genome sequence of the alkaliphilic bacterium Bacillus halodurans and genomic sequence comparison with Bacillus subtilis.</title>
        <authorList>
            <person name="Takami H."/>
            <person name="Nakasone K."/>
            <person name="Takaki Y."/>
            <person name="Maeno G."/>
            <person name="Sasaki R."/>
            <person name="Masui N."/>
            <person name="Fuji F."/>
            <person name="Hirama C."/>
            <person name="Nakamura Y."/>
            <person name="Ogasawara N."/>
            <person name="Kuhara S."/>
            <person name="Horikoshi K."/>
        </authorList>
    </citation>
    <scope>NUCLEOTIDE SEQUENCE [LARGE SCALE GENOMIC DNA]</scope>
    <source>
        <strain>ATCC BAA-125 / DSM 18197 / FERM 7344 / JCM 9153 / C-125</strain>
    </source>
</reference>
<evidence type="ECO:0000250" key="1"/>
<evidence type="ECO:0000255" key="2"/>
<evidence type="ECO:0000305" key="3"/>
<keyword id="KW-1003">Cell membrane</keyword>
<keyword id="KW-0201">Cytochrome c-type biogenesis</keyword>
<keyword id="KW-0472">Membrane</keyword>
<keyword id="KW-1185">Reference proteome</keyword>
<keyword id="KW-0749">Sporulation</keyword>
<keyword id="KW-0812">Transmembrane</keyword>
<keyword id="KW-1133">Transmembrane helix</keyword>